<comment type="function">
    <text evidence="1">Probably plays an important role in intracellular peptide degradation.</text>
</comment>
<comment type="catalytic activity">
    <reaction evidence="1">
        <text>Release of an N-terminal amino acid, Xaa, from a peptide or arylamide. Xaa is preferably Glu or Asp but may be other amino acids, including Leu, Met, His, Cys and Gln.</text>
        <dbReference type="EC" id="3.4.11.23"/>
    </reaction>
</comment>
<comment type="cofactor">
    <cofactor evidence="1">
        <name>Mn(2+)</name>
        <dbReference type="ChEBI" id="CHEBI:29035"/>
    </cofactor>
    <text evidence="1">Binds 2 manganese ions per subunit.</text>
</comment>
<comment type="subunit">
    <text evidence="1">Homohexamer.</text>
</comment>
<comment type="subcellular location">
    <subcellularLocation>
        <location evidence="1">Cytoplasm</location>
    </subcellularLocation>
</comment>
<comment type="similarity">
    <text evidence="1">Belongs to the peptidase M17 family.</text>
</comment>
<dbReference type="EC" id="3.4.11.23" evidence="1"/>
<dbReference type="EMBL" id="CP001138">
    <property type="protein sequence ID" value="ACH50992.1"/>
    <property type="molecule type" value="Genomic_DNA"/>
</dbReference>
<dbReference type="RefSeq" id="WP_000133541.1">
    <property type="nucleotide sequence ID" value="NC_011149.1"/>
</dbReference>
<dbReference type="SMR" id="B5F1B3"/>
<dbReference type="MEROPS" id="M17.004"/>
<dbReference type="KEGG" id="sea:SeAg_B2691"/>
<dbReference type="HOGENOM" id="CLU_013734_7_1_6"/>
<dbReference type="Proteomes" id="UP000008819">
    <property type="component" value="Chromosome"/>
</dbReference>
<dbReference type="GO" id="GO:0005737">
    <property type="term" value="C:cytoplasm"/>
    <property type="evidence" value="ECO:0007669"/>
    <property type="project" value="UniProtKB-SubCell"/>
</dbReference>
<dbReference type="GO" id="GO:0030145">
    <property type="term" value="F:manganese ion binding"/>
    <property type="evidence" value="ECO:0007669"/>
    <property type="project" value="UniProtKB-UniRule"/>
</dbReference>
<dbReference type="GO" id="GO:0070006">
    <property type="term" value="F:metalloaminopeptidase activity"/>
    <property type="evidence" value="ECO:0007669"/>
    <property type="project" value="InterPro"/>
</dbReference>
<dbReference type="GO" id="GO:0006508">
    <property type="term" value="P:proteolysis"/>
    <property type="evidence" value="ECO:0007669"/>
    <property type="project" value="UniProtKB-UniRule"/>
</dbReference>
<dbReference type="CDD" id="cd00433">
    <property type="entry name" value="Peptidase_M17"/>
    <property type="match status" value="1"/>
</dbReference>
<dbReference type="FunFam" id="3.40.630.10:FF:000037">
    <property type="entry name" value="Peptidase B"/>
    <property type="match status" value="1"/>
</dbReference>
<dbReference type="Gene3D" id="3.40.630.10">
    <property type="entry name" value="Zn peptidases"/>
    <property type="match status" value="1"/>
</dbReference>
<dbReference type="HAMAP" id="MF_00504">
    <property type="entry name" value="Aminopeptidase_M17"/>
    <property type="match status" value="1"/>
</dbReference>
<dbReference type="InterPro" id="IPR011356">
    <property type="entry name" value="Leucine_aapep/pepB"/>
</dbReference>
<dbReference type="InterPro" id="IPR047620">
    <property type="entry name" value="M17_PepB-like_N"/>
</dbReference>
<dbReference type="InterPro" id="IPR008330">
    <property type="entry name" value="Pept_M17_PepB"/>
</dbReference>
<dbReference type="InterPro" id="IPR000819">
    <property type="entry name" value="Peptidase_M17_C"/>
</dbReference>
<dbReference type="NCBIfam" id="NF003450">
    <property type="entry name" value="PRK05015.1"/>
    <property type="match status" value="1"/>
</dbReference>
<dbReference type="PANTHER" id="PTHR11963">
    <property type="entry name" value="LEUCINE AMINOPEPTIDASE-RELATED"/>
    <property type="match status" value="1"/>
</dbReference>
<dbReference type="PANTHER" id="PTHR11963:SF20">
    <property type="entry name" value="PEPTIDASE B"/>
    <property type="match status" value="1"/>
</dbReference>
<dbReference type="Pfam" id="PF12404">
    <property type="entry name" value="DUF3663"/>
    <property type="match status" value="1"/>
</dbReference>
<dbReference type="Pfam" id="PF00883">
    <property type="entry name" value="Peptidase_M17"/>
    <property type="match status" value="1"/>
</dbReference>
<dbReference type="PIRSF" id="PIRSF036388">
    <property type="entry name" value="Ctsl_amnpptdse_B"/>
    <property type="match status" value="1"/>
</dbReference>
<dbReference type="PRINTS" id="PR00481">
    <property type="entry name" value="LAMNOPPTDASE"/>
</dbReference>
<dbReference type="SUPFAM" id="SSF53187">
    <property type="entry name" value="Zn-dependent exopeptidases"/>
    <property type="match status" value="1"/>
</dbReference>
<dbReference type="PROSITE" id="PS00631">
    <property type="entry name" value="CYTOSOL_AP"/>
    <property type="match status" value="1"/>
</dbReference>
<protein>
    <recommendedName>
        <fullName evidence="1">Peptidase B</fullName>
        <ecNumber evidence="1">3.4.11.23</ecNumber>
    </recommendedName>
    <alternativeName>
        <fullName evidence="1">Aminopeptidase B</fullName>
    </alternativeName>
</protein>
<keyword id="KW-0031">Aminopeptidase</keyword>
<keyword id="KW-0963">Cytoplasm</keyword>
<keyword id="KW-0378">Hydrolase</keyword>
<keyword id="KW-0464">Manganese</keyword>
<keyword id="KW-0479">Metal-binding</keyword>
<keyword id="KW-0645">Protease</keyword>
<gene>
    <name evidence="1" type="primary">pepB</name>
    <name type="ordered locus">SeAg_B2691</name>
</gene>
<evidence type="ECO:0000255" key="1">
    <source>
        <dbReference type="HAMAP-Rule" id="MF_00504"/>
    </source>
</evidence>
<name>PEPB_SALA4</name>
<organism>
    <name type="scientific">Salmonella agona (strain SL483)</name>
    <dbReference type="NCBI Taxonomy" id="454166"/>
    <lineage>
        <taxon>Bacteria</taxon>
        <taxon>Pseudomonadati</taxon>
        <taxon>Pseudomonadota</taxon>
        <taxon>Gammaproteobacteria</taxon>
        <taxon>Enterobacterales</taxon>
        <taxon>Enterobacteriaceae</taxon>
        <taxon>Salmonella</taxon>
    </lineage>
</organism>
<sequence>MTEAMKITLSTQPADARWGDKATYSINNDGITLHLNGKDDLGLIQRAARKIDGLGIKQVALTGEGWDTERCWAFWAGYKGPKGVRTVMWPDLDDAQRQELDNRLTIIDWVRDTINAPAEELGPEQLAQRAVDLLCSVACDSVTYRITKGEDLREQNYMGLHTVGRGSERPPVLLALDYNPTGDKDAPVYACLVGKGITFDSGGYSIKQSAFMDSMKSDMGGAATVTGALAFAITRGLNKRVKLFLCCADNLISGNAFKLGDIIRYRNGKNVEVMNTDAEGRLVLADGLIDASAQHPQLIIDMATLTGAAKTALGNDYHALFSFDDTLAGRLLTSAAQENEPFWRLPLAEFHRNQLPSNFAELNNTGSAAYPAGASTAAGFLSHFVENYREGWLHIDCSATYRKAPVEQWAAGATGLGVRTIANLLTA</sequence>
<accession>B5F1B3</accession>
<reference key="1">
    <citation type="journal article" date="2011" name="J. Bacteriol.">
        <title>Comparative genomics of 28 Salmonella enterica isolates: evidence for CRISPR-mediated adaptive sublineage evolution.</title>
        <authorList>
            <person name="Fricke W.F."/>
            <person name="Mammel M.K."/>
            <person name="McDermott P.F."/>
            <person name="Tartera C."/>
            <person name="White D.G."/>
            <person name="Leclerc J.E."/>
            <person name="Ravel J."/>
            <person name="Cebula T.A."/>
        </authorList>
    </citation>
    <scope>NUCLEOTIDE SEQUENCE [LARGE SCALE GENOMIC DNA]</scope>
    <source>
        <strain>SL483</strain>
    </source>
</reference>
<feature type="chain" id="PRO_1000127012" description="Peptidase B">
    <location>
        <begin position="1"/>
        <end position="427"/>
    </location>
</feature>
<feature type="active site" evidence="1">
    <location>
        <position position="207"/>
    </location>
</feature>
<feature type="active site" evidence="1">
    <location>
        <position position="281"/>
    </location>
</feature>
<feature type="binding site" evidence="1">
    <location>
        <position position="195"/>
    </location>
    <ligand>
        <name>Mn(2+)</name>
        <dbReference type="ChEBI" id="CHEBI:29035"/>
        <label>2</label>
    </ligand>
</feature>
<feature type="binding site" evidence="1">
    <location>
        <position position="200"/>
    </location>
    <ligand>
        <name>Mn(2+)</name>
        <dbReference type="ChEBI" id="CHEBI:29035"/>
        <label>1</label>
    </ligand>
</feature>
<feature type="binding site" evidence="1">
    <location>
        <position position="200"/>
    </location>
    <ligand>
        <name>Mn(2+)</name>
        <dbReference type="ChEBI" id="CHEBI:29035"/>
        <label>2</label>
    </ligand>
</feature>
<feature type="binding site" evidence="1">
    <location>
        <position position="218"/>
    </location>
    <ligand>
        <name>Mn(2+)</name>
        <dbReference type="ChEBI" id="CHEBI:29035"/>
        <label>2</label>
    </ligand>
</feature>
<feature type="binding site" evidence="1">
    <location>
        <position position="277"/>
    </location>
    <ligand>
        <name>Mn(2+)</name>
        <dbReference type="ChEBI" id="CHEBI:29035"/>
        <label>1</label>
    </ligand>
</feature>
<feature type="binding site" evidence="1">
    <location>
        <position position="279"/>
    </location>
    <ligand>
        <name>Mn(2+)</name>
        <dbReference type="ChEBI" id="CHEBI:29035"/>
        <label>1</label>
    </ligand>
</feature>
<feature type="binding site" evidence="1">
    <location>
        <position position="279"/>
    </location>
    <ligand>
        <name>Mn(2+)</name>
        <dbReference type="ChEBI" id="CHEBI:29035"/>
        <label>2</label>
    </ligand>
</feature>
<proteinExistence type="inferred from homology"/>